<gene>
    <name type="primary">fixB</name>
    <name type="ordered locus">RA0446</name>
    <name type="ORF">SMa0819</name>
</gene>
<dbReference type="EMBL" id="M15546">
    <property type="protein sequence ID" value="AAA21769.1"/>
    <property type="molecule type" value="Genomic_DNA"/>
</dbReference>
<dbReference type="EMBL" id="AE006469">
    <property type="protein sequence ID" value="AAK65104.1"/>
    <property type="molecule type" value="Genomic_DNA"/>
</dbReference>
<dbReference type="PIR" id="B26952">
    <property type="entry name" value="B26952"/>
</dbReference>
<dbReference type="PIR" id="F95317">
    <property type="entry name" value="F95317"/>
</dbReference>
<dbReference type="RefSeq" id="NP_435692.1">
    <property type="nucleotide sequence ID" value="NC_003037.1"/>
</dbReference>
<dbReference type="SMR" id="P09819"/>
<dbReference type="EnsemblBacteria" id="AAK65104">
    <property type="protein sequence ID" value="AAK65104"/>
    <property type="gene ID" value="SMa0819"/>
</dbReference>
<dbReference type="KEGG" id="sme:SMa0819"/>
<dbReference type="PATRIC" id="fig|266834.11.peg.459"/>
<dbReference type="HOGENOM" id="CLU_034178_1_1_5"/>
<dbReference type="OrthoDB" id="9770286at2"/>
<dbReference type="Proteomes" id="UP000001976">
    <property type="component" value="Plasmid pSymA"/>
</dbReference>
<dbReference type="GO" id="GO:0009055">
    <property type="term" value="F:electron transfer activity"/>
    <property type="evidence" value="ECO:0007669"/>
    <property type="project" value="InterPro"/>
</dbReference>
<dbReference type="GO" id="GO:0050660">
    <property type="term" value="F:flavin adenine dinucleotide binding"/>
    <property type="evidence" value="ECO:0007669"/>
    <property type="project" value="InterPro"/>
</dbReference>
<dbReference type="GO" id="GO:0033539">
    <property type="term" value="P:fatty acid beta-oxidation using acyl-CoA dehydrogenase"/>
    <property type="evidence" value="ECO:0007669"/>
    <property type="project" value="TreeGrafter"/>
</dbReference>
<dbReference type="GO" id="GO:0009399">
    <property type="term" value="P:nitrogen fixation"/>
    <property type="evidence" value="ECO:0007669"/>
    <property type="project" value="UniProtKB-KW"/>
</dbReference>
<dbReference type="CDD" id="cd01715">
    <property type="entry name" value="ETF_alpha"/>
    <property type="match status" value="1"/>
</dbReference>
<dbReference type="Gene3D" id="3.40.50.620">
    <property type="entry name" value="HUPs"/>
    <property type="match status" value="1"/>
</dbReference>
<dbReference type="Gene3D" id="3.40.50.1220">
    <property type="entry name" value="TPP-binding domain"/>
    <property type="match status" value="1"/>
</dbReference>
<dbReference type="InterPro" id="IPR029035">
    <property type="entry name" value="DHS-like_NAD/FAD-binding_dom"/>
</dbReference>
<dbReference type="InterPro" id="IPR014730">
    <property type="entry name" value="ETF_a/b_N"/>
</dbReference>
<dbReference type="InterPro" id="IPR001308">
    <property type="entry name" value="ETF_a/FixB"/>
</dbReference>
<dbReference type="InterPro" id="IPR033947">
    <property type="entry name" value="ETF_alpha_N"/>
</dbReference>
<dbReference type="InterPro" id="IPR014731">
    <property type="entry name" value="ETF_asu_C"/>
</dbReference>
<dbReference type="InterPro" id="IPR018206">
    <property type="entry name" value="ETF_asu_C_CS"/>
</dbReference>
<dbReference type="InterPro" id="IPR014729">
    <property type="entry name" value="Rossmann-like_a/b/a_fold"/>
</dbReference>
<dbReference type="PANTHER" id="PTHR43153">
    <property type="entry name" value="ELECTRON TRANSFER FLAVOPROTEIN ALPHA"/>
    <property type="match status" value="1"/>
</dbReference>
<dbReference type="PANTHER" id="PTHR43153:SF1">
    <property type="entry name" value="ELECTRON TRANSFER FLAVOPROTEIN SUBUNIT ALPHA, MITOCHONDRIAL"/>
    <property type="match status" value="1"/>
</dbReference>
<dbReference type="Pfam" id="PF01012">
    <property type="entry name" value="ETF"/>
    <property type="match status" value="1"/>
</dbReference>
<dbReference type="Pfam" id="PF00766">
    <property type="entry name" value="ETF_alpha"/>
    <property type="match status" value="1"/>
</dbReference>
<dbReference type="PIRSF" id="PIRSF000089">
    <property type="entry name" value="Electra_flavoP_a"/>
    <property type="match status" value="1"/>
</dbReference>
<dbReference type="SMART" id="SM00893">
    <property type="entry name" value="ETF"/>
    <property type="match status" value="1"/>
</dbReference>
<dbReference type="SUPFAM" id="SSF52402">
    <property type="entry name" value="Adenine nucleotide alpha hydrolases-like"/>
    <property type="match status" value="1"/>
</dbReference>
<dbReference type="SUPFAM" id="SSF52467">
    <property type="entry name" value="DHS-like NAD/FAD-binding domain"/>
    <property type="match status" value="1"/>
</dbReference>
<dbReference type="PROSITE" id="PS00696">
    <property type="entry name" value="ETF_ALPHA"/>
    <property type="match status" value="1"/>
</dbReference>
<name>FIXB_RHIME</name>
<evidence type="ECO:0000255" key="1"/>
<evidence type="ECO:0000305" key="2"/>
<geneLocation type="plasmid">
    <name>pSymA</name>
    <name>megaplasmid 1</name>
</geneLocation>
<feature type="chain" id="PRO_0000167858" description="Protein FixB">
    <location>
        <begin position="1"/>
        <end position="353"/>
    </location>
</feature>
<feature type="binding site" evidence="1">
    <location>
        <begin position="283"/>
        <end position="311"/>
    </location>
    <ligand>
        <name>FAD</name>
        <dbReference type="ChEBI" id="CHEBI:57692"/>
    </ligand>
</feature>
<protein>
    <recommendedName>
        <fullName>Protein FixB</fullName>
    </recommendedName>
</protein>
<keyword id="KW-0249">Electron transport</keyword>
<keyword id="KW-0274">FAD</keyword>
<keyword id="KW-0285">Flavoprotein</keyword>
<keyword id="KW-0535">Nitrogen fixation</keyword>
<keyword id="KW-0614">Plasmid</keyword>
<keyword id="KW-1185">Reference proteome</keyword>
<keyword id="KW-0813">Transport</keyword>
<reference key="1">
    <citation type="journal article" date="1987" name="J. Bacteriol.">
        <title>Genetic and structural analysis of the Rhizobium meliloti fixA, fixB, fixC, and fixX genes.</title>
        <authorList>
            <person name="Earl C.D."/>
            <person name="Ronson C.W."/>
            <person name="Ausubel F.M."/>
        </authorList>
    </citation>
    <scope>NUCLEOTIDE SEQUENCE [GENOMIC DNA]</scope>
    <source>
        <strain>1021</strain>
    </source>
</reference>
<reference key="2">
    <citation type="journal article" date="2001" name="Proc. Natl. Acad. Sci. U.S.A.">
        <title>Nucleotide sequence and predicted functions of the entire Sinorhizobium meliloti pSymA megaplasmid.</title>
        <authorList>
            <person name="Barnett M.J."/>
            <person name="Fisher R.F."/>
            <person name="Jones T."/>
            <person name="Komp C."/>
            <person name="Abola A.P."/>
            <person name="Barloy-Hubler F."/>
            <person name="Bowser L."/>
            <person name="Capela D."/>
            <person name="Galibert F."/>
            <person name="Gouzy J."/>
            <person name="Gurjal M."/>
            <person name="Hong A."/>
            <person name="Huizar L."/>
            <person name="Hyman R.W."/>
            <person name="Kahn D."/>
            <person name="Kahn M.L."/>
            <person name="Kalman S."/>
            <person name="Keating D.H."/>
            <person name="Palm C."/>
            <person name="Peck M.C."/>
            <person name="Surzycki R."/>
            <person name="Wells D.H."/>
            <person name="Yeh K.-C."/>
            <person name="Davis R.W."/>
            <person name="Federspiel N.A."/>
            <person name="Long S.R."/>
        </authorList>
    </citation>
    <scope>NUCLEOTIDE SEQUENCE [LARGE SCALE GENOMIC DNA]</scope>
    <source>
        <strain>1021</strain>
    </source>
</reference>
<reference key="3">
    <citation type="journal article" date="2001" name="Science">
        <title>The composite genome of the legume symbiont Sinorhizobium meliloti.</title>
        <authorList>
            <person name="Galibert F."/>
            <person name="Finan T.M."/>
            <person name="Long S.R."/>
            <person name="Puehler A."/>
            <person name="Abola P."/>
            <person name="Ampe F."/>
            <person name="Barloy-Hubler F."/>
            <person name="Barnett M.J."/>
            <person name="Becker A."/>
            <person name="Boistard P."/>
            <person name="Bothe G."/>
            <person name="Boutry M."/>
            <person name="Bowser L."/>
            <person name="Buhrmester J."/>
            <person name="Cadieu E."/>
            <person name="Capela D."/>
            <person name="Chain P."/>
            <person name="Cowie A."/>
            <person name="Davis R.W."/>
            <person name="Dreano S."/>
            <person name="Federspiel N.A."/>
            <person name="Fisher R.F."/>
            <person name="Gloux S."/>
            <person name="Godrie T."/>
            <person name="Goffeau A."/>
            <person name="Golding B."/>
            <person name="Gouzy J."/>
            <person name="Gurjal M."/>
            <person name="Hernandez-Lucas I."/>
            <person name="Hong A."/>
            <person name="Huizar L."/>
            <person name="Hyman R.W."/>
            <person name="Jones T."/>
            <person name="Kahn D."/>
            <person name="Kahn M.L."/>
            <person name="Kalman S."/>
            <person name="Keating D.H."/>
            <person name="Kiss E."/>
            <person name="Komp C."/>
            <person name="Lelaure V."/>
            <person name="Masuy D."/>
            <person name="Palm C."/>
            <person name="Peck M.C."/>
            <person name="Pohl T.M."/>
            <person name="Portetelle D."/>
            <person name="Purnelle B."/>
            <person name="Ramsperger U."/>
            <person name="Surzycki R."/>
            <person name="Thebault P."/>
            <person name="Vandenbol M."/>
            <person name="Vorhoelter F.J."/>
            <person name="Weidner S."/>
            <person name="Wells D.H."/>
            <person name="Wong K."/>
            <person name="Yeh K.-C."/>
            <person name="Batut J."/>
        </authorList>
    </citation>
    <scope>NUCLEOTIDE SEQUENCE [LARGE SCALE GENOMIC DNA]</scope>
    <source>
        <strain>1021</strain>
    </source>
</reference>
<comment type="function">
    <text>May play a role in a redox process involved in nitrogen fixation.</text>
</comment>
<comment type="subunit">
    <text evidence="2">FixA and FixB form a heterodimer.</text>
</comment>
<comment type="similarity">
    <text evidence="2">Belongs to the ETF alpha-subunit/FixB family.</text>
</comment>
<organism>
    <name type="scientific">Rhizobium meliloti (strain 1021)</name>
    <name type="common">Ensifer meliloti</name>
    <name type="synonym">Sinorhizobium meliloti</name>
    <dbReference type="NCBI Taxonomy" id="266834"/>
    <lineage>
        <taxon>Bacteria</taxon>
        <taxon>Pseudomonadati</taxon>
        <taxon>Pseudomonadota</taxon>
        <taxon>Alphaproteobacteria</taxon>
        <taxon>Hyphomicrobiales</taxon>
        <taxon>Rhizobiaceae</taxon>
        <taxon>Sinorhizobium/Ensifer group</taxon>
        <taxon>Sinorhizobium</taxon>
    </lineage>
</organism>
<accession>P09819</accession>
<sequence>MKKGLPKQFQDYRNVWVFIELEHGQVHPVSIELLGEGRKLADKLGVHLAGVVIGPPGGQGTANAIADAFAYGADLSYLVESPLLAHYRNEPFTKALTDLVLANKPEILLLGATTLGRDLAGSVATTLKTGLTADCTELNVDSDGSLAATRPTFGGSLLCTIYTLKCRPQMATVRPSVMATPQRVNRPTGSIIRHDLKMLEEEIATKVLAFFSDCDSTIANLAYADVVVAGGLGLGAVQNLQLLKDLARTLGGDFGCSRPLVQKGWMPFDRQIGQTGNTIRPKLYIAAGISGAVQHRVGVEGSDLIVAINTDPNAPIFDFAHLGVVADAISFLPALTEVFTKRLEPRNLEKFVQ</sequence>
<proteinExistence type="inferred from homology"/>